<organism>
    <name type="scientific">Escherichia coli O157:H7</name>
    <dbReference type="NCBI Taxonomy" id="83334"/>
    <lineage>
        <taxon>Bacteria</taxon>
        <taxon>Pseudomonadati</taxon>
        <taxon>Pseudomonadota</taxon>
        <taxon>Gammaproteobacteria</taxon>
        <taxon>Enterobacterales</taxon>
        <taxon>Enterobacteriaceae</taxon>
        <taxon>Escherichia</taxon>
    </lineage>
</organism>
<keyword id="KW-1185">Reference proteome</keyword>
<keyword id="KW-0687">Ribonucleoprotein</keyword>
<keyword id="KW-0689">Ribosomal protein</keyword>
<keyword id="KW-0694">RNA-binding</keyword>
<keyword id="KW-0699">rRNA-binding</keyword>
<keyword id="KW-0820">tRNA-binding</keyword>
<protein>
    <recommendedName>
        <fullName evidence="1">Large ribosomal subunit protein uL16</fullName>
    </recommendedName>
    <alternativeName>
        <fullName evidence="2">50S ribosomal protein L16</fullName>
    </alternativeName>
</protein>
<evidence type="ECO:0000255" key="1">
    <source>
        <dbReference type="HAMAP-Rule" id="MF_01342"/>
    </source>
</evidence>
<evidence type="ECO:0000305" key="2"/>
<comment type="function">
    <text evidence="1">Binds 23S rRNA and is also seen to make contacts with the A and possibly P site tRNAs.</text>
</comment>
<comment type="subunit">
    <text evidence="1">Part of the 50S ribosomal subunit.</text>
</comment>
<comment type="similarity">
    <text evidence="1">Belongs to the universal ribosomal protein uL16 family.</text>
</comment>
<gene>
    <name evidence="1" type="primary">rplP</name>
    <name type="ordered locus">Z4684</name>
    <name type="ordered locus">ECs4178</name>
</gene>
<dbReference type="EMBL" id="AE005174">
    <property type="protein sequence ID" value="AAG58434.1"/>
    <property type="molecule type" value="Genomic_DNA"/>
</dbReference>
<dbReference type="EMBL" id="BA000007">
    <property type="protein sequence ID" value="BAB37601.1"/>
    <property type="molecule type" value="Genomic_DNA"/>
</dbReference>
<dbReference type="PIR" id="B91151">
    <property type="entry name" value="B91151"/>
</dbReference>
<dbReference type="PIR" id="F85996">
    <property type="entry name" value="F85996"/>
</dbReference>
<dbReference type="RefSeq" id="NP_312205.1">
    <property type="nucleotide sequence ID" value="NC_002695.1"/>
</dbReference>
<dbReference type="RefSeq" id="WP_000941212.1">
    <property type="nucleotide sequence ID" value="NZ_VOAI01000041.1"/>
</dbReference>
<dbReference type="SMR" id="P0ADY9"/>
<dbReference type="STRING" id="155864.Z4684"/>
<dbReference type="GeneID" id="915970"/>
<dbReference type="GeneID" id="93778674"/>
<dbReference type="KEGG" id="ece:Z4684"/>
<dbReference type="KEGG" id="ecs:ECs_4178"/>
<dbReference type="PATRIC" id="fig|386585.9.peg.4361"/>
<dbReference type="eggNOG" id="COG0197">
    <property type="taxonomic scope" value="Bacteria"/>
</dbReference>
<dbReference type="HOGENOM" id="CLU_078858_2_1_6"/>
<dbReference type="OMA" id="KGAVEYW"/>
<dbReference type="Proteomes" id="UP000000558">
    <property type="component" value="Chromosome"/>
</dbReference>
<dbReference type="Proteomes" id="UP000002519">
    <property type="component" value="Chromosome"/>
</dbReference>
<dbReference type="GO" id="GO:0022625">
    <property type="term" value="C:cytosolic large ribosomal subunit"/>
    <property type="evidence" value="ECO:0007669"/>
    <property type="project" value="TreeGrafter"/>
</dbReference>
<dbReference type="GO" id="GO:0019843">
    <property type="term" value="F:rRNA binding"/>
    <property type="evidence" value="ECO:0007669"/>
    <property type="project" value="UniProtKB-UniRule"/>
</dbReference>
<dbReference type="GO" id="GO:0003735">
    <property type="term" value="F:structural constituent of ribosome"/>
    <property type="evidence" value="ECO:0007669"/>
    <property type="project" value="InterPro"/>
</dbReference>
<dbReference type="GO" id="GO:0000049">
    <property type="term" value="F:tRNA binding"/>
    <property type="evidence" value="ECO:0007669"/>
    <property type="project" value="UniProtKB-KW"/>
</dbReference>
<dbReference type="GO" id="GO:0006412">
    <property type="term" value="P:translation"/>
    <property type="evidence" value="ECO:0007669"/>
    <property type="project" value="UniProtKB-UniRule"/>
</dbReference>
<dbReference type="CDD" id="cd01433">
    <property type="entry name" value="Ribosomal_L16_L10e"/>
    <property type="match status" value="1"/>
</dbReference>
<dbReference type="FunFam" id="3.90.1170.10:FF:000001">
    <property type="entry name" value="50S ribosomal protein L16"/>
    <property type="match status" value="1"/>
</dbReference>
<dbReference type="Gene3D" id="3.90.1170.10">
    <property type="entry name" value="Ribosomal protein L10e/L16"/>
    <property type="match status" value="1"/>
</dbReference>
<dbReference type="HAMAP" id="MF_01342">
    <property type="entry name" value="Ribosomal_uL16"/>
    <property type="match status" value="1"/>
</dbReference>
<dbReference type="InterPro" id="IPR047873">
    <property type="entry name" value="Ribosomal_uL16"/>
</dbReference>
<dbReference type="InterPro" id="IPR000114">
    <property type="entry name" value="Ribosomal_uL16_bact-type"/>
</dbReference>
<dbReference type="InterPro" id="IPR020798">
    <property type="entry name" value="Ribosomal_uL16_CS"/>
</dbReference>
<dbReference type="InterPro" id="IPR016180">
    <property type="entry name" value="Ribosomal_uL16_dom"/>
</dbReference>
<dbReference type="InterPro" id="IPR036920">
    <property type="entry name" value="Ribosomal_uL16_sf"/>
</dbReference>
<dbReference type="NCBIfam" id="TIGR01164">
    <property type="entry name" value="rplP_bact"/>
    <property type="match status" value="1"/>
</dbReference>
<dbReference type="PANTHER" id="PTHR12220">
    <property type="entry name" value="50S/60S RIBOSOMAL PROTEIN L16"/>
    <property type="match status" value="1"/>
</dbReference>
<dbReference type="PANTHER" id="PTHR12220:SF13">
    <property type="entry name" value="LARGE RIBOSOMAL SUBUNIT PROTEIN UL16M"/>
    <property type="match status" value="1"/>
</dbReference>
<dbReference type="Pfam" id="PF00252">
    <property type="entry name" value="Ribosomal_L16"/>
    <property type="match status" value="1"/>
</dbReference>
<dbReference type="PRINTS" id="PR00060">
    <property type="entry name" value="RIBOSOMALL16"/>
</dbReference>
<dbReference type="SUPFAM" id="SSF54686">
    <property type="entry name" value="Ribosomal protein L16p/L10e"/>
    <property type="match status" value="1"/>
</dbReference>
<dbReference type="PROSITE" id="PS00586">
    <property type="entry name" value="RIBOSOMAL_L16_1"/>
    <property type="match status" value="1"/>
</dbReference>
<dbReference type="PROSITE" id="PS00701">
    <property type="entry name" value="RIBOSOMAL_L16_2"/>
    <property type="match status" value="1"/>
</dbReference>
<proteinExistence type="inferred from homology"/>
<sequence>MLQPKRTKFRKMHKGRNRGLAQGTDVSFGSFGLKAVGRGRLTARQIEAARRAMTRAVKRQGKIWIRVFPDKPITEKPLAVRMGKGKGNVEYWVALIQPGKVLYEMDGVPEELAREAFKLAAAKLPIKTTFVTKTVM</sequence>
<name>RL16_ECO57</name>
<reference key="1">
    <citation type="journal article" date="2001" name="Nature">
        <title>Genome sequence of enterohaemorrhagic Escherichia coli O157:H7.</title>
        <authorList>
            <person name="Perna N.T."/>
            <person name="Plunkett G. III"/>
            <person name="Burland V."/>
            <person name="Mau B."/>
            <person name="Glasner J.D."/>
            <person name="Rose D.J."/>
            <person name="Mayhew G.F."/>
            <person name="Evans P.S."/>
            <person name="Gregor J."/>
            <person name="Kirkpatrick H.A."/>
            <person name="Posfai G."/>
            <person name="Hackett J."/>
            <person name="Klink S."/>
            <person name="Boutin A."/>
            <person name="Shao Y."/>
            <person name="Miller L."/>
            <person name="Grotbeck E.J."/>
            <person name="Davis N.W."/>
            <person name="Lim A."/>
            <person name="Dimalanta E.T."/>
            <person name="Potamousis K."/>
            <person name="Apodaca J."/>
            <person name="Anantharaman T.S."/>
            <person name="Lin J."/>
            <person name="Yen G."/>
            <person name="Schwartz D.C."/>
            <person name="Welch R.A."/>
            <person name="Blattner F.R."/>
        </authorList>
    </citation>
    <scope>NUCLEOTIDE SEQUENCE [LARGE SCALE GENOMIC DNA]</scope>
    <source>
        <strain>O157:H7 / EDL933 / ATCC 700927 / EHEC</strain>
    </source>
</reference>
<reference key="2">
    <citation type="journal article" date="2001" name="DNA Res.">
        <title>Complete genome sequence of enterohemorrhagic Escherichia coli O157:H7 and genomic comparison with a laboratory strain K-12.</title>
        <authorList>
            <person name="Hayashi T."/>
            <person name="Makino K."/>
            <person name="Ohnishi M."/>
            <person name="Kurokawa K."/>
            <person name="Ishii K."/>
            <person name="Yokoyama K."/>
            <person name="Han C.-G."/>
            <person name="Ohtsubo E."/>
            <person name="Nakayama K."/>
            <person name="Murata T."/>
            <person name="Tanaka M."/>
            <person name="Tobe T."/>
            <person name="Iida T."/>
            <person name="Takami H."/>
            <person name="Honda T."/>
            <person name="Sasakawa C."/>
            <person name="Ogasawara N."/>
            <person name="Yasunaga T."/>
            <person name="Kuhara S."/>
            <person name="Shiba T."/>
            <person name="Hattori M."/>
            <person name="Shinagawa H."/>
        </authorList>
    </citation>
    <scope>NUCLEOTIDE SEQUENCE [LARGE SCALE GENOMIC DNA]</scope>
    <source>
        <strain>O157:H7 / Sakai / RIMD 0509952 / EHEC</strain>
    </source>
</reference>
<feature type="chain" id="PRO_0000062102" description="Large ribosomal subunit protein uL16">
    <location>
        <begin position="1"/>
        <end position="136"/>
    </location>
</feature>
<accession>P0ADY9</accession>
<accession>P02414</accession>